<comment type="function">
    <text>Produces ATP from ADP in the presence of a proton gradient across the membrane. The alpha chain is a regulatory subunit.</text>
</comment>
<comment type="catalytic activity">
    <reaction evidence="1">
        <text>ATP + H2O + 4 H(+)(in) = ADP + phosphate + 5 H(+)(out)</text>
        <dbReference type="Rhea" id="RHEA:57720"/>
        <dbReference type="ChEBI" id="CHEBI:15377"/>
        <dbReference type="ChEBI" id="CHEBI:15378"/>
        <dbReference type="ChEBI" id="CHEBI:30616"/>
        <dbReference type="ChEBI" id="CHEBI:43474"/>
        <dbReference type="ChEBI" id="CHEBI:456216"/>
        <dbReference type="EC" id="7.1.2.2"/>
    </reaction>
</comment>
<comment type="subunit">
    <text evidence="1">F-type ATPases have 2 components, CF(1) - the catalytic core - and CF(0) - the membrane proton channel. CF(1) has five subunits: alpha(3), beta(3), gamma(1), delta(1), epsilon(1). CF(0) has three main subunits: a(1), b(2) and c(9-12). The alpha and beta chains form an alternating ring which encloses part of the gamma chain. CF(1) is attached to CF(0) by a central stalk formed by the gamma and epsilon chains, while a peripheral stalk is formed by the delta and b chains.</text>
</comment>
<comment type="subcellular location">
    <subcellularLocation>
        <location evidence="1">Cell membrane</location>
        <topology evidence="1">Peripheral membrane protein</topology>
    </subcellularLocation>
</comment>
<comment type="similarity">
    <text evidence="1">Belongs to the ATPase alpha/beta chains family.</text>
</comment>
<gene>
    <name evidence="1" type="primary">atpA</name>
    <name type="ordered locus">llmg_1948</name>
</gene>
<feature type="chain" id="PRO_0000285240" description="ATP synthase subunit alpha">
    <location>
        <begin position="1"/>
        <end position="500"/>
    </location>
</feature>
<feature type="binding site" evidence="1">
    <location>
        <begin position="169"/>
        <end position="176"/>
    </location>
    <ligand>
        <name>ATP</name>
        <dbReference type="ChEBI" id="CHEBI:30616"/>
    </ligand>
</feature>
<feature type="site" description="Required for activity" evidence="1">
    <location>
        <position position="362"/>
    </location>
</feature>
<keyword id="KW-0066">ATP synthesis</keyword>
<keyword id="KW-0067">ATP-binding</keyword>
<keyword id="KW-1003">Cell membrane</keyword>
<keyword id="KW-0139">CF(1)</keyword>
<keyword id="KW-0375">Hydrogen ion transport</keyword>
<keyword id="KW-0406">Ion transport</keyword>
<keyword id="KW-0472">Membrane</keyword>
<keyword id="KW-0547">Nucleotide-binding</keyword>
<keyword id="KW-1278">Translocase</keyword>
<keyword id="KW-0813">Transport</keyword>
<reference key="1">
    <citation type="journal article" date="2000" name="J. Bacteriol.">
        <title>The membrane bound H+-ATPase complex is essential for growth of Lactococcus lactis.</title>
        <authorList>
            <person name="Koebmann B.J."/>
            <person name="Nilsson D."/>
            <person name="Kuipers O.P."/>
            <person name="Jensen P.R."/>
        </authorList>
    </citation>
    <scope>NUCLEOTIDE SEQUENCE [GENOMIC DNA]</scope>
</reference>
<reference key="2">
    <citation type="journal article" date="2007" name="J. Bacteriol.">
        <title>The complete genome sequence of the lactic acid bacterial paradigm Lactococcus lactis subsp. cremoris MG1363.</title>
        <authorList>
            <person name="Wegmann U."/>
            <person name="O'Connell-Motherway M."/>
            <person name="Zomer A."/>
            <person name="Buist G."/>
            <person name="Shearman C."/>
            <person name="Canchaya C."/>
            <person name="Ventura M."/>
            <person name="Goesmann A."/>
            <person name="Gasson M.J."/>
            <person name="Kuipers O.P."/>
            <person name="van Sinderen D."/>
            <person name="Kok J."/>
        </authorList>
    </citation>
    <scope>NUCLEOTIDE SEQUENCE [LARGE SCALE GENOMIC DNA]</scope>
    <source>
        <strain>MG1363</strain>
    </source>
</reference>
<accession>A2RMI4</accession>
<accession>Q9RAU2</accession>
<evidence type="ECO:0000255" key="1">
    <source>
        <dbReference type="HAMAP-Rule" id="MF_01346"/>
    </source>
</evidence>
<sequence length="500" mass="54310">MAIKANEISSLIKKQIENFTPDFEVAETGVVTYVGDGIARAYGLENAMSGELVEFSNGILGMAQNLDATDVGIIVLGDFLSIREGDTVKRTGKIMEIQVGEELIGRVVNPLGQPVDGLGELNTGKTRPVEAKAPGVMQRKSVSEPLQTGLKAIDALVPIGRGQRELIIGDRQTGKTSVAIDAILNQKGQDMICIYVAIGQKESTVRTQVETLRKLGAMDYTIVVTASASQPSPLLYIAPYAGAAMGEEFMYNGKHVLVVYDDLSKQAVAYRELSLLLRRPPGREAYPGDVFYLHSRLLERAAKLSDDLGGGSMTALPFIETQAGDISAYIATNVISITDGQIFLENDLFYSGVRPAIDAGSSVSRVGGAAQIKAMKKVAGTLRLDLASFRELEAFTQFGSDLDEATQAKLNRGRRTVEVLKQPLHKPLAVEKQVLILYALTHGHLDNVPVDDVLDFETKMFDFFDANYADLLNVITDTKDLPEEAKLDEAIKAFKNTTNY</sequence>
<proteinExistence type="inferred from homology"/>
<protein>
    <recommendedName>
        <fullName evidence="1">ATP synthase subunit alpha</fullName>
        <ecNumber evidence="1">7.1.2.2</ecNumber>
    </recommendedName>
    <alternativeName>
        <fullName evidence="1">ATP synthase F1 sector subunit alpha</fullName>
    </alternativeName>
    <alternativeName>
        <fullName evidence="1">F-ATPase subunit alpha</fullName>
    </alternativeName>
</protein>
<name>ATPA_LACLM</name>
<dbReference type="EC" id="7.1.2.2" evidence="1"/>
<dbReference type="EMBL" id="AF059739">
    <property type="protein sequence ID" value="AAF02206.1"/>
    <property type="molecule type" value="Genomic_DNA"/>
</dbReference>
<dbReference type="EMBL" id="AM406671">
    <property type="protein sequence ID" value="CAL98516.1"/>
    <property type="molecule type" value="Genomic_DNA"/>
</dbReference>
<dbReference type="RefSeq" id="WP_011835691.1">
    <property type="nucleotide sequence ID" value="NC_009004.1"/>
</dbReference>
<dbReference type="SMR" id="A2RMI4"/>
<dbReference type="STRING" id="416870.llmg_1948"/>
<dbReference type="KEGG" id="llm:llmg_1948"/>
<dbReference type="eggNOG" id="COG0056">
    <property type="taxonomic scope" value="Bacteria"/>
</dbReference>
<dbReference type="HOGENOM" id="CLU_010091_2_1_9"/>
<dbReference type="OrthoDB" id="9803053at2"/>
<dbReference type="PhylomeDB" id="A2RMI4"/>
<dbReference type="Proteomes" id="UP000000364">
    <property type="component" value="Chromosome"/>
</dbReference>
<dbReference type="GO" id="GO:0005886">
    <property type="term" value="C:plasma membrane"/>
    <property type="evidence" value="ECO:0007669"/>
    <property type="project" value="UniProtKB-SubCell"/>
</dbReference>
<dbReference type="GO" id="GO:0045259">
    <property type="term" value="C:proton-transporting ATP synthase complex"/>
    <property type="evidence" value="ECO:0007669"/>
    <property type="project" value="UniProtKB-KW"/>
</dbReference>
<dbReference type="GO" id="GO:0043531">
    <property type="term" value="F:ADP binding"/>
    <property type="evidence" value="ECO:0007669"/>
    <property type="project" value="TreeGrafter"/>
</dbReference>
<dbReference type="GO" id="GO:0005524">
    <property type="term" value="F:ATP binding"/>
    <property type="evidence" value="ECO:0007669"/>
    <property type="project" value="UniProtKB-UniRule"/>
</dbReference>
<dbReference type="GO" id="GO:0046933">
    <property type="term" value="F:proton-transporting ATP synthase activity, rotational mechanism"/>
    <property type="evidence" value="ECO:0007669"/>
    <property type="project" value="UniProtKB-UniRule"/>
</dbReference>
<dbReference type="CDD" id="cd18113">
    <property type="entry name" value="ATP-synt_F1_alpha_C"/>
    <property type="match status" value="1"/>
</dbReference>
<dbReference type="CDD" id="cd18116">
    <property type="entry name" value="ATP-synt_F1_alpha_N"/>
    <property type="match status" value="1"/>
</dbReference>
<dbReference type="CDD" id="cd01132">
    <property type="entry name" value="F1-ATPase_alpha_CD"/>
    <property type="match status" value="1"/>
</dbReference>
<dbReference type="FunFam" id="1.20.150.20:FF:000001">
    <property type="entry name" value="ATP synthase subunit alpha"/>
    <property type="match status" value="1"/>
</dbReference>
<dbReference type="FunFam" id="2.40.30.20:FF:000001">
    <property type="entry name" value="ATP synthase subunit alpha"/>
    <property type="match status" value="1"/>
</dbReference>
<dbReference type="FunFam" id="3.40.50.300:FF:000002">
    <property type="entry name" value="ATP synthase subunit alpha"/>
    <property type="match status" value="1"/>
</dbReference>
<dbReference type="Gene3D" id="2.40.30.20">
    <property type="match status" value="1"/>
</dbReference>
<dbReference type="Gene3D" id="1.20.150.20">
    <property type="entry name" value="ATP synthase alpha/beta chain, C-terminal domain"/>
    <property type="match status" value="1"/>
</dbReference>
<dbReference type="Gene3D" id="3.40.50.300">
    <property type="entry name" value="P-loop containing nucleotide triphosphate hydrolases"/>
    <property type="match status" value="1"/>
</dbReference>
<dbReference type="HAMAP" id="MF_01346">
    <property type="entry name" value="ATP_synth_alpha_bact"/>
    <property type="match status" value="1"/>
</dbReference>
<dbReference type="InterPro" id="IPR023366">
    <property type="entry name" value="ATP_synth_asu-like_sf"/>
</dbReference>
<dbReference type="InterPro" id="IPR000793">
    <property type="entry name" value="ATP_synth_asu_C"/>
</dbReference>
<dbReference type="InterPro" id="IPR038376">
    <property type="entry name" value="ATP_synth_asu_C_sf"/>
</dbReference>
<dbReference type="InterPro" id="IPR033732">
    <property type="entry name" value="ATP_synth_F1_a_nt-bd_dom"/>
</dbReference>
<dbReference type="InterPro" id="IPR005294">
    <property type="entry name" value="ATP_synth_F1_asu"/>
</dbReference>
<dbReference type="InterPro" id="IPR004100">
    <property type="entry name" value="ATPase_F1/V1/A1_a/bsu_N"/>
</dbReference>
<dbReference type="InterPro" id="IPR036121">
    <property type="entry name" value="ATPase_F1/V1/A1_a/bsu_N_sf"/>
</dbReference>
<dbReference type="InterPro" id="IPR000194">
    <property type="entry name" value="ATPase_F1/V1/A1_a/bsu_nucl-bd"/>
</dbReference>
<dbReference type="InterPro" id="IPR027417">
    <property type="entry name" value="P-loop_NTPase"/>
</dbReference>
<dbReference type="NCBIfam" id="TIGR00962">
    <property type="entry name" value="atpA"/>
    <property type="match status" value="1"/>
</dbReference>
<dbReference type="NCBIfam" id="NF009884">
    <property type="entry name" value="PRK13343.1"/>
    <property type="match status" value="1"/>
</dbReference>
<dbReference type="PANTHER" id="PTHR48082">
    <property type="entry name" value="ATP SYNTHASE SUBUNIT ALPHA, MITOCHONDRIAL"/>
    <property type="match status" value="1"/>
</dbReference>
<dbReference type="PANTHER" id="PTHR48082:SF2">
    <property type="entry name" value="ATP SYNTHASE SUBUNIT ALPHA, MITOCHONDRIAL"/>
    <property type="match status" value="1"/>
</dbReference>
<dbReference type="Pfam" id="PF00006">
    <property type="entry name" value="ATP-synt_ab"/>
    <property type="match status" value="1"/>
</dbReference>
<dbReference type="Pfam" id="PF00306">
    <property type="entry name" value="ATP-synt_ab_C"/>
    <property type="match status" value="1"/>
</dbReference>
<dbReference type="Pfam" id="PF02874">
    <property type="entry name" value="ATP-synt_ab_N"/>
    <property type="match status" value="1"/>
</dbReference>
<dbReference type="PIRSF" id="PIRSF039088">
    <property type="entry name" value="F_ATPase_subunit_alpha"/>
    <property type="match status" value="1"/>
</dbReference>
<dbReference type="SUPFAM" id="SSF47917">
    <property type="entry name" value="C-terminal domain of alpha and beta subunits of F1 ATP synthase"/>
    <property type="match status" value="1"/>
</dbReference>
<dbReference type="SUPFAM" id="SSF50615">
    <property type="entry name" value="N-terminal domain of alpha and beta subunits of F1 ATP synthase"/>
    <property type="match status" value="1"/>
</dbReference>
<dbReference type="SUPFAM" id="SSF52540">
    <property type="entry name" value="P-loop containing nucleoside triphosphate hydrolases"/>
    <property type="match status" value="1"/>
</dbReference>
<organism>
    <name type="scientific">Lactococcus lactis subsp. cremoris (strain MG1363)</name>
    <dbReference type="NCBI Taxonomy" id="416870"/>
    <lineage>
        <taxon>Bacteria</taxon>
        <taxon>Bacillati</taxon>
        <taxon>Bacillota</taxon>
        <taxon>Bacilli</taxon>
        <taxon>Lactobacillales</taxon>
        <taxon>Streptococcaceae</taxon>
        <taxon>Lactococcus</taxon>
        <taxon>Lactococcus cremoris subsp. cremoris</taxon>
    </lineage>
</organism>